<name>DNAJ_RICM5</name>
<gene>
    <name evidence="1" type="primary">dnaJ</name>
    <name type="ordered locus">RMA_0245</name>
</gene>
<keyword id="KW-0143">Chaperone</keyword>
<keyword id="KW-0963">Cytoplasm</keyword>
<keyword id="KW-0235">DNA replication</keyword>
<keyword id="KW-0479">Metal-binding</keyword>
<keyword id="KW-0677">Repeat</keyword>
<keyword id="KW-0346">Stress response</keyword>
<keyword id="KW-0862">Zinc</keyword>
<keyword id="KW-0863">Zinc-finger</keyword>
<reference key="1">
    <citation type="journal article" date="2007" name="Genome Res.">
        <title>Lateral gene transfer between obligate intracellular bacteria: evidence from the Rickettsia massiliae genome.</title>
        <authorList>
            <person name="Blanc G."/>
            <person name="Ogata H."/>
            <person name="Robert C."/>
            <person name="Audic S."/>
            <person name="Claverie J.-M."/>
            <person name="Raoult D."/>
        </authorList>
    </citation>
    <scope>NUCLEOTIDE SEQUENCE [LARGE SCALE GENOMIC DNA]</scope>
    <source>
        <strain>Mtu5</strain>
    </source>
</reference>
<dbReference type="EMBL" id="CP000683">
    <property type="protein sequence ID" value="ABV84526.1"/>
    <property type="molecule type" value="Genomic_DNA"/>
</dbReference>
<dbReference type="SMR" id="A8F0U0"/>
<dbReference type="KEGG" id="rms:RMA_0245"/>
<dbReference type="HOGENOM" id="CLU_017633_0_7_5"/>
<dbReference type="Proteomes" id="UP000001311">
    <property type="component" value="Chromosome"/>
</dbReference>
<dbReference type="GO" id="GO:0005737">
    <property type="term" value="C:cytoplasm"/>
    <property type="evidence" value="ECO:0007669"/>
    <property type="project" value="UniProtKB-SubCell"/>
</dbReference>
<dbReference type="GO" id="GO:0005524">
    <property type="term" value="F:ATP binding"/>
    <property type="evidence" value="ECO:0007669"/>
    <property type="project" value="InterPro"/>
</dbReference>
<dbReference type="GO" id="GO:0031072">
    <property type="term" value="F:heat shock protein binding"/>
    <property type="evidence" value="ECO:0007669"/>
    <property type="project" value="InterPro"/>
</dbReference>
<dbReference type="GO" id="GO:0051082">
    <property type="term" value="F:unfolded protein binding"/>
    <property type="evidence" value="ECO:0007669"/>
    <property type="project" value="UniProtKB-UniRule"/>
</dbReference>
<dbReference type="GO" id="GO:0008270">
    <property type="term" value="F:zinc ion binding"/>
    <property type="evidence" value="ECO:0007669"/>
    <property type="project" value="UniProtKB-UniRule"/>
</dbReference>
<dbReference type="GO" id="GO:0051085">
    <property type="term" value="P:chaperone cofactor-dependent protein refolding"/>
    <property type="evidence" value="ECO:0007669"/>
    <property type="project" value="TreeGrafter"/>
</dbReference>
<dbReference type="GO" id="GO:0006260">
    <property type="term" value="P:DNA replication"/>
    <property type="evidence" value="ECO:0007669"/>
    <property type="project" value="UniProtKB-KW"/>
</dbReference>
<dbReference type="GO" id="GO:0042026">
    <property type="term" value="P:protein refolding"/>
    <property type="evidence" value="ECO:0007669"/>
    <property type="project" value="TreeGrafter"/>
</dbReference>
<dbReference type="GO" id="GO:0009408">
    <property type="term" value="P:response to heat"/>
    <property type="evidence" value="ECO:0007669"/>
    <property type="project" value="InterPro"/>
</dbReference>
<dbReference type="CDD" id="cd06257">
    <property type="entry name" value="DnaJ"/>
    <property type="match status" value="1"/>
</dbReference>
<dbReference type="CDD" id="cd10747">
    <property type="entry name" value="DnaJ_C"/>
    <property type="match status" value="1"/>
</dbReference>
<dbReference type="CDD" id="cd10719">
    <property type="entry name" value="DnaJ_zf"/>
    <property type="match status" value="1"/>
</dbReference>
<dbReference type="FunFam" id="1.10.287.110:FF:000153">
    <property type="entry name" value="Chaperone protein DnaJ"/>
    <property type="match status" value="1"/>
</dbReference>
<dbReference type="FunFam" id="2.10.230.10:FF:000002">
    <property type="entry name" value="Molecular chaperone DnaJ"/>
    <property type="match status" value="1"/>
</dbReference>
<dbReference type="FunFam" id="2.60.260.20:FF:000004">
    <property type="entry name" value="Molecular chaperone DnaJ"/>
    <property type="match status" value="1"/>
</dbReference>
<dbReference type="Gene3D" id="1.10.287.110">
    <property type="entry name" value="DnaJ domain"/>
    <property type="match status" value="1"/>
</dbReference>
<dbReference type="Gene3D" id="2.10.230.10">
    <property type="entry name" value="Heat shock protein DnaJ, cysteine-rich domain"/>
    <property type="match status" value="1"/>
</dbReference>
<dbReference type="Gene3D" id="2.60.260.20">
    <property type="entry name" value="Urease metallochaperone UreE, N-terminal domain"/>
    <property type="match status" value="2"/>
</dbReference>
<dbReference type="HAMAP" id="MF_01152">
    <property type="entry name" value="DnaJ"/>
    <property type="match status" value="1"/>
</dbReference>
<dbReference type="InterPro" id="IPR012724">
    <property type="entry name" value="DnaJ"/>
</dbReference>
<dbReference type="InterPro" id="IPR002939">
    <property type="entry name" value="DnaJ_C"/>
</dbReference>
<dbReference type="InterPro" id="IPR001623">
    <property type="entry name" value="DnaJ_domain"/>
</dbReference>
<dbReference type="InterPro" id="IPR018253">
    <property type="entry name" value="DnaJ_domain_CS"/>
</dbReference>
<dbReference type="InterPro" id="IPR008971">
    <property type="entry name" value="HSP40/DnaJ_pept-bd"/>
</dbReference>
<dbReference type="InterPro" id="IPR001305">
    <property type="entry name" value="HSP_DnaJ_Cys-rich_dom"/>
</dbReference>
<dbReference type="InterPro" id="IPR036410">
    <property type="entry name" value="HSP_DnaJ_Cys-rich_dom_sf"/>
</dbReference>
<dbReference type="InterPro" id="IPR036869">
    <property type="entry name" value="J_dom_sf"/>
</dbReference>
<dbReference type="NCBIfam" id="TIGR02349">
    <property type="entry name" value="DnaJ_bact"/>
    <property type="match status" value="1"/>
</dbReference>
<dbReference type="NCBIfam" id="NF008035">
    <property type="entry name" value="PRK10767.1"/>
    <property type="match status" value="1"/>
</dbReference>
<dbReference type="NCBIfam" id="NF010893">
    <property type="entry name" value="PRK14300.1"/>
    <property type="match status" value="1"/>
</dbReference>
<dbReference type="PANTHER" id="PTHR43096">
    <property type="entry name" value="DNAJ HOMOLOG 1, MITOCHONDRIAL-RELATED"/>
    <property type="match status" value="1"/>
</dbReference>
<dbReference type="PANTHER" id="PTHR43096:SF52">
    <property type="entry name" value="DNAJ HOMOLOG 1, MITOCHONDRIAL-RELATED"/>
    <property type="match status" value="1"/>
</dbReference>
<dbReference type="Pfam" id="PF00226">
    <property type="entry name" value="DnaJ"/>
    <property type="match status" value="1"/>
</dbReference>
<dbReference type="Pfam" id="PF01556">
    <property type="entry name" value="DnaJ_C"/>
    <property type="match status" value="1"/>
</dbReference>
<dbReference type="Pfam" id="PF00684">
    <property type="entry name" value="DnaJ_CXXCXGXG"/>
    <property type="match status" value="1"/>
</dbReference>
<dbReference type="PRINTS" id="PR00625">
    <property type="entry name" value="JDOMAIN"/>
</dbReference>
<dbReference type="SMART" id="SM00271">
    <property type="entry name" value="DnaJ"/>
    <property type="match status" value="1"/>
</dbReference>
<dbReference type="SUPFAM" id="SSF46565">
    <property type="entry name" value="Chaperone J-domain"/>
    <property type="match status" value="1"/>
</dbReference>
<dbReference type="SUPFAM" id="SSF57938">
    <property type="entry name" value="DnaJ/Hsp40 cysteine-rich domain"/>
    <property type="match status" value="1"/>
</dbReference>
<dbReference type="SUPFAM" id="SSF49493">
    <property type="entry name" value="HSP40/DnaJ peptide-binding domain"/>
    <property type="match status" value="2"/>
</dbReference>
<dbReference type="PROSITE" id="PS00636">
    <property type="entry name" value="DNAJ_1"/>
    <property type="match status" value="1"/>
</dbReference>
<dbReference type="PROSITE" id="PS50076">
    <property type="entry name" value="DNAJ_2"/>
    <property type="match status" value="1"/>
</dbReference>
<dbReference type="PROSITE" id="PS51188">
    <property type="entry name" value="ZF_CR"/>
    <property type="match status" value="1"/>
</dbReference>
<sequence>MMSQNYYQILGVSKTASQADLKKAYLKLAKQYHPDTTDAKDAEKKFKEINAAYDVLKDEQKRAAYDRLGHDAFQNQQSRGGGGNHGGFHPDINDIFGDFFSDFMGGSRRSSRPTSAKVRGSDLKYNLTINLEEAFHGIEKNISFSSAVKCDTCHGSGSEKGETVTTCDACSGVGVTRMQQGFFTIEQACHKCQGNGHIIKKPCKKCHGMGRYHKQRNLSVNIPAGVENGTRIRHTGEGEAGIRGGNSGDLYVDIAIKPHDIYKVDGAHLHCKLPISFVNAALGGEIEVPVIEGGKVKLTIPAGTQNGDQLRLRNKGMSKMRSTIRGDMLTHMHVEVPKNLSKRQRELLEEFKKESINEKENDGSFFNKMKSLWS</sequence>
<feature type="chain" id="PRO_1000085274" description="Chaperone protein DnaJ">
    <location>
        <begin position="1"/>
        <end position="374"/>
    </location>
</feature>
<feature type="domain" description="J" evidence="1">
    <location>
        <begin position="5"/>
        <end position="69"/>
    </location>
</feature>
<feature type="repeat" description="CXXCXGXG motif">
    <location>
        <begin position="150"/>
        <end position="157"/>
    </location>
</feature>
<feature type="repeat" description="CXXCXGXG motif">
    <location>
        <begin position="167"/>
        <end position="174"/>
    </location>
</feature>
<feature type="repeat" description="CXXCXGXG motif">
    <location>
        <begin position="189"/>
        <end position="196"/>
    </location>
</feature>
<feature type="repeat" description="CXXCXGXG motif">
    <location>
        <begin position="203"/>
        <end position="210"/>
    </location>
</feature>
<feature type="zinc finger region" description="CR-type" evidence="1">
    <location>
        <begin position="137"/>
        <end position="215"/>
    </location>
</feature>
<feature type="binding site" evidence="1">
    <location>
        <position position="150"/>
    </location>
    <ligand>
        <name>Zn(2+)</name>
        <dbReference type="ChEBI" id="CHEBI:29105"/>
        <label>1</label>
    </ligand>
</feature>
<feature type="binding site" evidence="1">
    <location>
        <position position="153"/>
    </location>
    <ligand>
        <name>Zn(2+)</name>
        <dbReference type="ChEBI" id="CHEBI:29105"/>
        <label>1</label>
    </ligand>
</feature>
<feature type="binding site" evidence="1">
    <location>
        <position position="167"/>
    </location>
    <ligand>
        <name>Zn(2+)</name>
        <dbReference type="ChEBI" id="CHEBI:29105"/>
        <label>2</label>
    </ligand>
</feature>
<feature type="binding site" evidence="1">
    <location>
        <position position="170"/>
    </location>
    <ligand>
        <name>Zn(2+)</name>
        <dbReference type="ChEBI" id="CHEBI:29105"/>
        <label>2</label>
    </ligand>
</feature>
<feature type="binding site" evidence="1">
    <location>
        <position position="189"/>
    </location>
    <ligand>
        <name>Zn(2+)</name>
        <dbReference type="ChEBI" id="CHEBI:29105"/>
        <label>2</label>
    </ligand>
</feature>
<feature type="binding site" evidence="1">
    <location>
        <position position="192"/>
    </location>
    <ligand>
        <name>Zn(2+)</name>
        <dbReference type="ChEBI" id="CHEBI:29105"/>
        <label>2</label>
    </ligand>
</feature>
<feature type="binding site" evidence="1">
    <location>
        <position position="203"/>
    </location>
    <ligand>
        <name>Zn(2+)</name>
        <dbReference type="ChEBI" id="CHEBI:29105"/>
        <label>1</label>
    </ligand>
</feature>
<feature type="binding site" evidence="1">
    <location>
        <position position="206"/>
    </location>
    <ligand>
        <name>Zn(2+)</name>
        <dbReference type="ChEBI" id="CHEBI:29105"/>
        <label>1</label>
    </ligand>
</feature>
<evidence type="ECO:0000255" key="1">
    <source>
        <dbReference type="HAMAP-Rule" id="MF_01152"/>
    </source>
</evidence>
<proteinExistence type="inferred from homology"/>
<organism>
    <name type="scientific">Rickettsia massiliae (strain Mtu5)</name>
    <dbReference type="NCBI Taxonomy" id="416276"/>
    <lineage>
        <taxon>Bacteria</taxon>
        <taxon>Pseudomonadati</taxon>
        <taxon>Pseudomonadota</taxon>
        <taxon>Alphaproteobacteria</taxon>
        <taxon>Rickettsiales</taxon>
        <taxon>Rickettsiaceae</taxon>
        <taxon>Rickettsieae</taxon>
        <taxon>Rickettsia</taxon>
        <taxon>spotted fever group</taxon>
    </lineage>
</organism>
<protein>
    <recommendedName>
        <fullName evidence="1">Chaperone protein DnaJ</fullName>
    </recommendedName>
</protein>
<accession>A8F0U0</accession>
<comment type="function">
    <text evidence="1">Participates actively in the response to hyperosmotic and heat shock by preventing the aggregation of stress-denatured proteins and by disaggregating proteins, also in an autonomous, DnaK-independent fashion. Unfolded proteins bind initially to DnaJ; upon interaction with the DnaJ-bound protein, DnaK hydrolyzes its bound ATP, resulting in the formation of a stable complex. GrpE releases ADP from DnaK; ATP binding to DnaK triggers the release of the substrate protein, thus completing the reaction cycle. Several rounds of ATP-dependent interactions between DnaJ, DnaK and GrpE are required for fully efficient folding. Also involved, together with DnaK and GrpE, in the DNA replication of plasmids through activation of initiation proteins.</text>
</comment>
<comment type="cofactor">
    <cofactor evidence="1">
        <name>Zn(2+)</name>
        <dbReference type="ChEBI" id="CHEBI:29105"/>
    </cofactor>
    <text evidence="1">Binds 2 Zn(2+) ions per monomer.</text>
</comment>
<comment type="subunit">
    <text evidence="1">Homodimer.</text>
</comment>
<comment type="subcellular location">
    <subcellularLocation>
        <location evidence="1">Cytoplasm</location>
    </subcellularLocation>
</comment>
<comment type="domain">
    <text evidence="1">The J domain is necessary and sufficient to stimulate DnaK ATPase activity. Zinc center 1 plays an important role in the autonomous, DnaK-independent chaperone activity of DnaJ. Zinc center 2 is essential for interaction with DnaK and for DnaJ activity.</text>
</comment>
<comment type="similarity">
    <text evidence="1">Belongs to the DnaJ family.</text>
</comment>